<accession>Q7AA80</accession>
<accession>Q8X6U2</accession>
<proteinExistence type="inferred from homology"/>
<sequence length="295" mass="33294">MSSSRPVFRSRWLPYLLVAPQLIITVIFFIWPAGEALWYSLQSVDPFGFSSRFVGLDNFVALFHDSYYIDSFWTTIKFSTFVTVSGLLVSLFFAALVEYIVRGSRFYQTLMLLPYAVAPAVAAVLWIFLFNPGRGLITHFLAEFGYDWNHAQNSGQAMFLVVFASVWKQISYNFLFFYAALQSIPRSLIEAAAIDGAGPIRRFFKIALPLIAPVSFFLLVVNLVYAFFDTFPVIDAATSGGPVQATTTLIYKIYREGFTGLDLASSAAQSVVLMFLVIVLTVMQFRYVESKVRYQ</sequence>
<evidence type="ECO:0000250" key="1">
    <source>
        <dbReference type="UniProtKB" id="P10905"/>
    </source>
</evidence>
<evidence type="ECO:0000255" key="2"/>
<evidence type="ECO:0000255" key="3">
    <source>
        <dbReference type="PROSITE-ProRule" id="PRU00441"/>
    </source>
</evidence>
<evidence type="ECO:0000305" key="4"/>
<reference key="1">
    <citation type="journal article" date="2001" name="Nature">
        <title>Genome sequence of enterohaemorrhagic Escherichia coli O157:H7.</title>
        <authorList>
            <person name="Perna N.T."/>
            <person name="Plunkett G. III"/>
            <person name="Burland V."/>
            <person name="Mau B."/>
            <person name="Glasner J.D."/>
            <person name="Rose D.J."/>
            <person name="Mayhew G.F."/>
            <person name="Evans P.S."/>
            <person name="Gregor J."/>
            <person name="Kirkpatrick H.A."/>
            <person name="Posfai G."/>
            <person name="Hackett J."/>
            <person name="Klink S."/>
            <person name="Boutin A."/>
            <person name="Shao Y."/>
            <person name="Miller L."/>
            <person name="Grotbeck E.J."/>
            <person name="Davis N.W."/>
            <person name="Lim A."/>
            <person name="Dimalanta E.T."/>
            <person name="Potamousis K."/>
            <person name="Apodaca J."/>
            <person name="Anantharaman T.S."/>
            <person name="Lin J."/>
            <person name="Yen G."/>
            <person name="Schwartz D.C."/>
            <person name="Welch R.A."/>
            <person name="Blattner F.R."/>
        </authorList>
    </citation>
    <scope>NUCLEOTIDE SEQUENCE [LARGE SCALE GENOMIC DNA]</scope>
    <source>
        <strain>O157:H7 / EDL933 / ATCC 700927 / EHEC</strain>
    </source>
</reference>
<reference key="2">
    <citation type="journal article" date="2001" name="DNA Res.">
        <title>Complete genome sequence of enterohemorrhagic Escherichia coli O157:H7 and genomic comparison with a laboratory strain K-12.</title>
        <authorList>
            <person name="Hayashi T."/>
            <person name="Makino K."/>
            <person name="Ohnishi M."/>
            <person name="Kurokawa K."/>
            <person name="Ishii K."/>
            <person name="Yokoyama K."/>
            <person name="Han C.-G."/>
            <person name="Ohtsubo E."/>
            <person name="Nakayama K."/>
            <person name="Murata T."/>
            <person name="Tanaka M."/>
            <person name="Tobe T."/>
            <person name="Iida T."/>
            <person name="Takami H."/>
            <person name="Honda T."/>
            <person name="Sasakawa C."/>
            <person name="Ogasawara N."/>
            <person name="Yasunaga T."/>
            <person name="Kuhara S."/>
            <person name="Shiba T."/>
            <person name="Hattori M."/>
            <person name="Shinagawa H."/>
        </authorList>
    </citation>
    <scope>NUCLEOTIDE SEQUENCE [LARGE SCALE GENOMIC DNA]</scope>
    <source>
        <strain>O157:H7 / Sakai / RIMD 0509952 / EHEC</strain>
    </source>
</reference>
<gene>
    <name type="primary">ugpA</name>
    <name type="ordered locus">Z4820</name>
    <name type="ordered locus">ECs4298</name>
</gene>
<organism>
    <name type="scientific">Escherichia coli O157:H7</name>
    <dbReference type="NCBI Taxonomy" id="83334"/>
    <lineage>
        <taxon>Bacteria</taxon>
        <taxon>Pseudomonadati</taxon>
        <taxon>Pseudomonadota</taxon>
        <taxon>Gammaproteobacteria</taxon>
        <taxon>Enterobacterales</taxon>
        <taxon>Enterobacteriaceae</taxon>
        <taxon>Escherichia</taxon>
    </lineage>
</organism>
<dbReference type="EMBL" id="AE005174">
    <property type="protein sequence ID" value="AAG58558.1"/>
    <property type="molecule type" value="Genomic_DNA"/>
</dbReference>
<dbReference type="EMBL" id="BA000007">
    <property type="protein sequence ID" value="BAB37721.1"/>
    <property type="molecule type" value="Genomic_DNA"/>
</dbReference>
<dbReference type="PIR" id="B86012">
    <property type="entry name" value="B86012"/>
</dbReference>
<dbReference type="PIR" id="B91166">
    <property type="entry name" value="B91166"/>
</dbReference>
<dbReference type="RefSeq" id="NP_312325.1">
    <property type="nucleotide sequence ID" value="NC_002695.1"/>
</dbReference>
<dbReference type="RefSeq" id="WP_000099297.1">
    <property type="nucleotide sequence ID" value="NZ_VOAI01000004.1"/>
</dbReference>
<dbReference type="SMR" id="Q7AA80"/>
<dbReference type="STRING" id="155864.Z4820"/>
<dbReference type="GeneID" id="915848"/>
<dbReference type="KEGG" id="ece:Z4820"/>
<dbReference type="KEGG" id="ecs:ECs_4298"/>
<dbReference type="PATRIC" id="fig|386585.9.peg.4489"/>
<dbReference type="eggNOG" id="COG1175">
    <property type="taxonomic scope" value="Bacteria"/>
</dbReference>
<dbReference type="HOGENOM" id="CLU_016047_0_2_6"/>
<dbReference type="OMA" id="LWYSVQS"/>
<dbReference type="Proteomes" id="UP000000558">
    <property type="component" value="Chromosome"/>
</dbReference>
<dbReference type="Proteomes" id="UP000002519">
    <property type="component" value="Chromosome"/>
</dbReference>
<dbReference type="GO" id="GO:0005886">
    <property type="term" value="C:plasma membrane"/>
    <property type="evidence" value="ECO:0007669"/>
    <property type="project" value="UniProtKB-SubCell"/>
</dbReference>
<dbReference type="GO" id="GO:0055085">
    <property type="term" value="P:transmembrane transport"/>
    <property type="evidence" value="ECO:0007669"/>
    <property type="project" value="InterPro"/>
</dbReference>
<dbReference type="CDD" id="cd06261">
    <property type="entry name" value="TM_PBP2"/>
    <property type="match status" value="1"/>
</dbReference>
<dbReference type="FunFam" id="1.10.3720.10:FF:000028">
    <property type="entry name" value="sn-glycerol-3-phosphate ABC transporter permease UgpA"/>
    <property type="match status" value="1"/>
</dbReference>
<dbReference type="Gene3D" id="1.10.3720.10">
    <property type="entry name" value="MetI-like"/>
    <property type="match status" value="1"/>
</dbReference>
<dbReference type="InterPro" id="IPR000515">
    <property type="entry name" value="MetI-like"/>
</dbReference>
<dbReference type="InterPro" id="IPR035906">
    <property type="entry name" value="MetI-like_sf"/>
</dbReference>
<dbReference type="InterPro" id="IPR050809">
    <property type="entry name" value="UgpAE/MalFG_permease"/>
</dbReference>
<dbReference type="NCBIfam" id="NF007852">
    <property type="entry name" value="PRK10561.1"/>
    <property type="match status" value="1"/>
</dbReference>
<dbReference type="PANTHER" id="PTHR43227">
    <property type="entry name" value="BLL4140 PROTEIN"/>
    <property type="match status" value="1"/>
</dbReference>
<dbReference type="PANTHER" id="PTHR43227:SF9">
    <property type="entry name" value="SN-GLYCEROL-3-PHOSPHATE TRANSPORT SYSTEM PERMEASE PROTEIN UGPA"/>
    <property type="match status" value="1"/>
</dbReference>
<dbReference type="Pfam" id="PF00528">
    <property type="entry name" value="BPD_transp_1"/>
    <property type="match status" value="1"/>
</dbReference>
<dbReference type="SUPFAM" id="SSF161098">
    <property type="entry name" value="MetI-like"/>
    <property type="match status" value="1"/>
</dbReference>
<dbReference type="PROSITE" id="PS50928">
    <property type="entry name" value="ABC_TM1"/>
    <property type="match status" value="1"/>
</dbReference>
<comment type="function">
    <text evidence="1">Part of the ABC transporter complex UgpBAEC involved in sn-glycerol-3-phosphate (G3P) import. Probably responsible for the translocation of the substrate across the membrane.</text>
</comment>
<comment type="subunit">
    <text evidence="1">The complex is composed of two ATP-binding proteins (UgpC), two transmembrane proteins (UgpA and UgpE) and a solute-binding protein (UgpB).</text>
</comment>
<comment type="subcellular location">
    <subcellularLocation>
        <location evidence="1">Cell inner membrane</location>
        <topology evidence="2">Multi-pass membrane protein</topology>
    </subcellularLocation>
</comment>
<comment type="similarity">
    <text evidence="4">Belongs to the binding-protein-dependent transport system permease family. UgpAE subfamily.</text>
</comment>
<protein>
    <recommendedName>
        <fullName evidence="1">sn-glycerol-3-phosphate transport system permease protein UgpA</fullName>
    </recommendedName>
</protein>
<keyword id="KW-0997">Cell inner membrane</keyword>
<keyword id="KW-1003">Cell membrane</keyword>
<keyword id="KW-0472">Membrane</keyword>
<keyword id="KW-1185">Reference proteome</keyword>
<keyword id="KW-0812">Transmembrane</keyword>
<keyword id="KW-1133">Transmembrane helix</keyword>
<keyword id="KW-0813">Transport</keyword>
<feature type="chain" id="PRO_0000292821" description="sn-glycerol-3-phosphate transport system permease protein UgpA">
    <location>
        <begin position="1"/>
        <end position="295"/>
    </location>
</feature>
<feature type="topological domain" description="Cytoplasmic" evidence="2">
    <location>
        <begin position="1"/>
        <end position="11"/>
    </location>
</feature>
<feature type="transmembrane region" description="Helical" evidence="3">
    <location>
        <begin position="12"/>
        <end position="32"/>
    </location>
</feature>
<feature type="topological domain" description="Periplasmic" evidence="2">
    <location>
        <begin position="33"/>
        <end position="80"/>
    </location>
</feature>
<feature type="transmembrane region" description="Helical" evidence="3">
    <location>
        <begin position="81"/>
        <end position="101"/>
    </location>
</feature>
<feature type="topological domain" description="Cytoplasmic" evidence="2">
    <location>
        <begin position="102"/>
        <end position="109"/>
    </location>
</feature>
<feature type="transmembrane region" description="Helical" evidence="3">
    <location>
        <begin position="110"/>
        <end position="130"/>
    </location>
</feature>
<feature type="topological domain" description="Periplasmic" evidence="2">
    <location>
        <begin position="131"/>
        <end position="156"/>
    </location>
</feature>
<feature type="transmembrane region" description="Helical" evidence="3">
    <location>
        <begin position="157"/>
        <end position="177"/>
    </location>
</feature>
<feature type="topological domain" description="Cytoplasmic" evidence="2">
    <location>
        <begin position="178"/>
        <end position="207"/>
    </location>
</feature>
<feature type="transmembrane region" description="Helical" evidence="3">
    <location>
        <begin position="208"/>
        <end position="228"/>
    </location>
</feature>
<feature type="topological domain" description="Periplasmic" evidence="2">
    <location>
        <begin position="229"/>
        <end position="262"/>
    </location>
</feature>
<feature type="transmembrane region" description="Helical" evidence="3">
    <location>
        <begin position="263"/>
        <end position="283"/>
    </location>
</feature>
<feature type="topological domain" description="Cytoplasmic" evidence="2">
    <location>
        <begin position="284"/>
        <end position="295"/>
    </location>
</feature>
<feature type="domain" description="ABC transmembrane type-1" evidence="3">
    <location>
        <begin position="76"/>
        <end position="284"/>
    </location>
</feature>
<name>UGPA_ECO57</name>